<protein>
    <recommendedName>
        <fullName>Probable cytochrome P450 513F1</fullName>
        <ecNumber>1.14.-.-</ecNumber>
    </recommendedName>
</protein>
<gene>
    <name type="primary">cyp513F1</name>
    <name type="ORF">DDB_G0278679</name>
</gene>
<name>C513F_DICDI</name>
<organism>
    <name type="scientific">Dictyostelium discoideum</name>
    <name type="common">Social amoeba</name>
    <dbReference type="NCBI Taxonomy" id="44689"/>
    <lineage>
        <taxon>Eukaryota</taxon>
        <taxon>Amoebozoa</taxon>
        <taxon>Evosea</taxon>
        <taxon>Eumycetozoa</taxon>
        <taxon>Dictyostelia</taxon>
        <taxon>Dictyosteliales</taxon>
        <taxon>Dictyosteliaceae</taxon>
        <taxon>Dictyostelium</taxon>
    </lineage>
</organism>
<keyword id="KW-0349">Heme</keyword>
<keyword id="KW-0408">Iron</keyword>
<keyword id="KW-0472">Membrane</keyword>
<keyword id="KW-0479">Metal-binding</keyword>
<keyword id="KW-0503">Monooxygenase</keyword>
<keyword id="KW-0560">Oxidoreductase</keyword>
<keyword id="KW-1185">Reference proteome</keyword>
<keyword id="KW-0812">Transmembrane</keyword>
<keyword id="KW-1133">Transmembrane helix</keyword>
<proteinExistence type="inferred from homology"/>
<evidence type="ECO:0000250" key="1"/>
<evidence type="ECO:0000255" key="2"/>
<evidence type="ECO:0000305" key="3"/>
<sequence length="504" mass="58197">MILSLLFLFVITLYFLIPSRISKINKNIPGPIGYPIVGNLFQINKNVVKSIDGFYKEFGPVYRLRMGNIETVVLTGIDTLEESFLFNKHSFVDRFVKKSRKINNGLDIIHSNGEYWKILKTIFQTQMTPRKIKSYQFEIQSQVDLMAEQLYKSKNNDNIVTNINENMKFMLFNIMSILIFGKQSIYCNNTNNINNKDDDDVDKEKKHIIFSIGRFFKTSGSLFYSDFIPILLPFDLINLSRNNFFKDFQVLTNFVSKNVNQQLSKLNDNNNNNKEKEGEERKSIVEAYLENYLNGEIKFESVLSSCTNLLLAGTDSSANTLSFLLVSLINNPEIQEKVYNEIITNLKNDEISINDRFKCPYTCAVIKETHRLYSIAPLSEPHYCSNDVEIKGFKIAKGTQIIQNIYSSSRSEQYWDKPLSFIPERFIDNANIKEKNKNIVSFGLGLRGCIGKSFAEYMIFLTVVRLIKNYKFSNPSPNQPLKEIGEYGLVMNCANYNAKIEKRK</sequence>
<dbReference type="EC" id="1.14.-.-"/>
<dbReference type="EMBL" id="AAFI02000023">
    <property type="protein sequence ID" value="EAS66900.1"/>
    <property type="molecule type" value="Genomic_DNA"/>
</dbReference>
<dbReference type="RefSeq" id="XP_001134584.1">
    <property type="nucleotide sequence ID" value="XM_001134584.1"/>
</dbReference>
<dbReference type="SMR" id="Q1ZXI7"/>
<dbReference type="STRING" id="44689.Q1ZXI7"/>
<dbReference type="PaxDb" id="44689-DDB0232343"/>
<dbReference type="EnsemblProtists" id="EAS66900">
    <property type="protein sequence ID" value="EAS66900"/>
    <property type="gene ID" value="DDB_G0278679"/>
</dbReference>
<dbReference type="GeneID" id="8621539"/>
<dbReference type="KEGG" id="ddi:DDB_G0278679"/>
<dbReference type="dictyBase" id="DDB_G0278679">
    <property type="gene designation" value="cyp513F1"/>
</dbReference>
<dbReference type="VEuPathDB" id="AmoebaDB:DDB_G0278679"/>
<dbReference type="eggNOG" id="KOG0156">
    <property type="taxonomic scope" value="Eukaryota"/>
</dbReference>
<dbReference type="HOGENOM" id="CLU_001570_22_0_1"/>
<dbReference type="InParanoid" id="Q1ZXI7"/>
<dbReference type="OMA" id="FPWISRR"/>
<dbReference type="PhylomeDB" id="Q1ZXI7"/>
<dbReference type="PRO" id="PR:Q1ZXI7"/>
<dbReference type="Proteomes" id="UP000002195">
    <property type="component" value="Chromosome 3"/>
</dbReference>
<dbReference type="GO" id="GO:0016020">
    <property type="term" value="C:membrane"/>
    <property type="evidence" value="ECO:0007669"/>
    <property type="project" value="UniProtKB-SubCell"/>
</dbReference>
<dbReference type="GO" id="GO:0020037">
    <property type="term" value="F:heme binding"/>
    <property type="evidence" value="ECO:0007669"/>
    <property type="project" value="InterPro"/>
</dbReference>
<dbReference type="GO" id="GO:0005506">
    <property type="term" value="F:iron ion binding"/>
    <property type="evidence" value="ECO:0007669"/>
    <property type="project" value="InterPro"/>
</dbReference>
<dbReference type="GO" id="GO:0004497">
    <property type="term" value="F:monooxygenase activity"/>
    <property type="evidence" value="ECO:0007669"/>
    <property type="project" value="UniProtKB-KW"/>
</dbReference>
<dbReference type="GO" id="GO:0016705">
    <property type="term" value="F:oxidoreductase activity, acting on paired donors, with incorporation or reduction of molecular oxygen"/>
    <property type="evidence" value="ECO:0007669"/>
    <property type="project" value="InterPro"/>
</dbReference>
<dbReference type="CDD" id="cd20617">
    <property type="entry name" value="CYP1_2-like"/>
    <property type="match status" value="1"/>
</dbReference>
<dbReference type="Gene3D" id="1.10.630.10">
    <property type="entry name" value="Cytochrome P450"/>
    <property type="match status" value="1"/>
</dbReference>
<dbReference type="InterPro" id="IPR001128">
    <property type="entry name" value="Cyt_P450"/>
</dbReference>
<dbReference type="InterPro" id="IPR017972">
    <property type="entry name" value="Cyt_P450_CS"/>
</dbReference>
<dbReference type="InterPro" id="IPR002401">
    <property type="entry name" value="Cyt_P450_E_grp-I"/>
</dbReference>
<dbReference type="InterPro" id="IPR036396">
    <property type="entry name" value="Cyt_P450_sf"/>
</dbReference>
<dbReference type="PANTHER" id="PTHR24303:SF31">
    <property type="entry name" value="CYTOCHROME P450 307A1-RELATED"/>
    <property type="match status" value="1"/>
</dbReference>
<dbReference type="PANTHER" id="PTHR24303">
    <property type="entry name" value="HEME-BINDING MONOOXYGENASE FAMILY"/>
    <property type="match status" value="1"/>
</dbReference>
<dbReference type="Pfam" id="PF00067">
    <property type="entry name" value="p450"/>
    <property type="match status" value="1"/>
</dbReference>
<dbReference type="PRINTS" id="PR00463">
    <property type="entry name" value="EP450I"/>
</dbReference>
<dbReference type="PRINTS" id="PR00385">
    <property type="entry name" value="P450"/>
</dbReference>
<dbReference type="SUPFAM" id="SSF48264">
    <property type="entry name" value="Cytochrome P450"/>
    <property type="match status" value="1"/>
</dbReference>
<dbReference type="PROSITE" id="PS00086">
    <property type="entry name" value="CYTOCHROME_P450"/>
    <property type="match status" value="1"/>
</dbReference>
<feature type="chain" id="PRO_0000318819" description="Probable cytochrome P450 513F1">
    <location>
        <begin position="1"/>
        <end position="504"/>
    </location>
</feature>
<feature type="transmembrane region" description="Helical" evidence="2">
    <location>
        <begin position="1"/>
        <end position="21"/>
    </location>
</feature>
<feature type="binding site" description="axial binding residue" evidence="1">
    <location>
        <position position="449"/>
    </location>
    <ligand>
        <name>heme</name>
        <dbReference type="ChEBI" id="CHEBI:30413"/>
    </ligand>
    <ligandPart>
        <name>Fe</name>
        <dbReference type="ChEBI" id="CHEBI:18248"/>
    </ligandPart>
</feature>
<accession>Q1ZXI7</accession>
<comment type="cofactor">
    <cofactor evidence="1">
        <name>heme</name>
        <dbReference type="ChEBI" id="CHEBI:30413"/>
    </cofactor>
</comment>
<comment type="subcellular location">
    <subcellularLocation>
        <location evidence="3">Membrane</location>
        <topology evidence="3">Single-pass membrane protein</topology>
    </subcellularLocation>
</comment>
<comment type="similarity">
    <text evidence="3">Belongs to the cytochrome P450 family.</text>
</comment>
<reference key="1">
    <citation type="journal article" date="2005" name="Nature">
        <title>The genome of the social amoeba Dictyostelium discoideum.</title>
        <authorList>
            <person name="Eichinger L."/>
            <person name="Pachebat J.A."/>
            <person name="Gloeckner G."/>
            <person name="Rajandream M.A."/>
            <person name="Sucgang R."/>
            <person name="Berriman M."/>
            <person name="Song J."/>
            <person name="Olsen R."/>
            <person name="Szafranski K."/>
            <person name="Xu Q."/>
            <person name="Tunggal B."/>
            <person name="Kummerfeld S."/>
            <person name="Madera M."/>
            <person name="Konfortov B.A."/>
            <person name="Rivero F."/>
            <person name="Bankier A.T."/>
            <person name="Lehmann R."/>
            <person name="Hamlin N."/>
            <person name="Davies R."/>
            <person name="Gaudet P."/>
            <person name="Fey P."/>
            <person name="Pilcher K."/>
            <person name="Chen G."/>
            <person name="Saunders D."/>
            <person name="Sodergren E.J."/>
            <person name="Davis P."/>
            <person name="Kerhornou A."/>
            <person name="Nie X."/>
            <person name="Hall N."/>
            <person name="Anjard C."/>
            <person name="Hemphill L."/>
            <person name="Bason N."/>
            <person name="Farbrother P."/>
            <person name="Desany B."/>
            <person name="Just E."/>
            <person name="Morio T."/>
            <person name="Rost R."/>
            <person name="Churcher C.M."/>
            <person name="Cooper J."/>
            <person name="Haydock S."/>
            <person name="van Driessche N."/>
            <person name="Cronin A."/>
            <person name="Goodhead I."/>
            <person name="Muzny D.M."/>
            <person name="Mourier T."/>
            <person name="Pain A."/>
            <person name="Lu M."/>
            <person name="Harper D."/>
            <person name="Lindsay R."/>
            <person name="Hauser H."/>
            <person name="James K.D."/>
            <person name="Quiles M."/>
            <person name="Madan Babu M."/>
            <person name="Saito T."/>
            <person name="Buchrieser C."/>
            <person name="Wardroper A."/>
            <person name="Felder M."/>
            <person name="Thangavelu M."/>
            <person name="Johnson D."/>
            <person name="Knights A."/>
            <person name="Loulseged H."/>
            <person name="Mungall K.L."/>
            <person name="Oliver K."/>
            <person name="Price C."/>
            <person name="Quail M.A."/>
            <person name="Urushihara H."/>
            <person name="Hernandez J."/>
            <person name="Rabbinowitsch E."/>
            <person name="Steffen D."/>
            <person name="Sanders M."/>
            <person name="Ma J."/>
            <person name="Kohara Y."/>
            <person name="Sharp S."/>
            <person name="Simmonds M.N."/>
            <person name="Spiegler S."/>
            <person name="Tivey A."/>
            <person name="Sugano S."/>
            <person name="White B."/>
            <person name="Walker D."/>
            <person name="Woodward J.R."/>
            <person name="Winckler T."/>
            <person name="Tanaka Y."/>
            <person name="Shaulsky G."/>
            <person name="Schleicher M."/>
            <person name="Weinstock G.M."/>
            <person name="Rosenthal A."/>
            <person name="Cox E.C."/>
            <person name="Chisholm R.L."/>
            <person name="Gibbs R.A."/>
            <person name="Loomis W.F."/>
            <person name="Platzer M."/>
            <person name="Kay R.R."/>
            <person name="Williams J.G."/>
            <person name="Dear P.H."/>
            <person name="Noegel A.A."/>
            <person name="Barrell B.G."/>
            <person name="Kuspa A."/>
        </authorList>
    </citation>
    <scope>NUCLEOTIDE SEQUENCE [LARGE SCALE GENOMIC DNA]</scope>
    <source>
        <strain>AX4</strain>
    </source>
</reference>